<sequence length="300" mass="33871">MHFQDIITTLNSFWADQGCVLLQPYDTEKGAGTMSPHTVLRAIGPEPWAVAYPEPCRRPTDGRYGDNPNRAQHYFQYQVLIKPSPVGIQETYLASLEALGVCTAEHDIRFVEDNWESPTLGAWGVGWEVWLDGMEVTQFTYFQQCGGLDCSPVPIEITYGIERLAMYLQNVENIWDLSWNNKRSYGDIWLSLEKGQCDFNFESSDPSRLKQLFDLYEAEASDLIAKQLPAPALDFVLKCSHTFNLLEARGVISVTERTATIGRIRSLARGVAEAWLTEREAMGFPLLNNKALPLDQPLQS</sequence>
<feature type="chain" id="PRO_1000047463" description="Glycine--tRNA ligase alpha subunit">
    <location>
        <begin position="1"/>
        <end position="300"/>
    </location>
</feature>
<reference key="1">
    <citation type="journal article" date="2003" name="Nature">
        <title>Genome divergence in two Prochlorococcus ecotypes reflects oceanic niche differentiation.</title>
        <authorList>
            <person name="Rocap G."/>
            <person name="Larimer F.W."/>
            <person name="Lamerdin J.E."/>
            <person name="Malfatti S."/>
            <person name="Chain P."/>
            <person name="Ahlgren N.A."/>
            <person name="Arellano A."/>
            <person name="Coleman M."/>
            <person name="Hauser L."/>
            <person name="Hess W.R."/>
            <person name="Johnson Z.I."/>
            <person name="Land M.L."/>
            <person name="Lindell D."/>
            <person name="Post A.F."/>
            <person name="Regala W."/>
            <person name="Shah M."/>
            <person name="Shaw S.L."/>
            <person name="Steglich C."/>
            <person name="Sullivan M.B."/>
            <person name="Ting C.S."/>
            <person name="Tolonen A."/>
            <person name="Webb E.A."/>
            <person name="Zinser E.R."/>
            <person name="Chisholm S.W."/>
        </authorList>
    </citation>
    <scope>NUCLEOTIDE SEQUENCE [LARGE SCALE GENOMIC DNA]</scope>
    <source>
        <strain>MIT 9313</strain>
    </source>
</reference>
<keyword id="KW-0030">Aminoacyl-tRNA synthetase</keyword>
<keyword id="KW-0067">ATP-binding</keyword>
<keyword id="KW-0963">Cytoplasm</keyword>
<keyword id="KW-0436">Ligase</keyword>
<keyword id="KW-0547">Nucleotide-binding</keyword>
<keyword id="KW-0648">Protein biosynthesis</keyword>
<keyword id="KW-1185">Reference proteome</keyword>
<name>SYGA_PROMM</name>
<comment type="catalytic activity">
    <reaction evidence="1">
        <text>tRNA(Gly) + glycine + ATP = glycyl-tRNA(Gly) + AMP + diphosphate</text>
        <dbReference type="Rhea" id="RHEA:16013"/>
        <dbReference type="Rhea" id="RHEA-COMP:9664"/>
        <dbReference type="Rhea" id="RHEA-COMP:9683"/>
        <dbReference type="ChEBI" id="CHEBI:30616"/>
        <dbReference type="ChEBI" id="CHEBI:33019"/>
        <dbReference type="ChEBI" id="CHEBI:57305"/>
        <dbReference type="ChEBI" id="CHEBI:78442"/>
        <dbReference type="ChEBI" id="CHEBI:78522"/>
        <dbReference type="ChEBI" id="CHEBI:456215"/>
        <dbReference type="EC" id="6.1.1.14"/>
    </reaction>
</comment>
<comment type="subunit">
    <text evidence="1">Tetramer of two alpha and two beta subunits.</text>
</comment>
<comment type="subcellular location">
    <subcellularLocation>
        <location evidence="1">Cytoplasm</location>
    </subcellularLocation>
</comment>
<comment type="similarity">
    <text evidence="1">Belongs to the class-II aminoacyl-tRNA synthetase family.</text>
</comment>
<accession>Q7V8Q1</accession>
<organism>
    <name type="scientific">Prochlorococcus marinus (strain MIT 9313)</name>
    <dbReference type="NCBI Taxonomy" id="74547"/>
    <lineage>
        <taxon>Bacteria</taxon>
        <taxon>Bacillati</taxon>
        <taxon>Cyanobacteriota</taxon>
        <taxon>Cyanophyceae</taxon>
        <taxon>Synechococcales</taxon>
        <taxon>Prochlorococcaceae</taxon>
        <taxon>Prochlorococcus</taxon>
    </lineage>
</organism>
<proteinExistence type="inferred from homology"/>
<gene>
    <name evidence="1" type="primary">glyQ</name>
    <name type="ordered locus">PMT_0283</name>
</gene>
<evidence type="ECO:0000255" key="1">
    <source>
        <dbReference type="HAMAP-Rule" id="MF_00254"/>
    </source>
</evidence>
<protein>
    <recommendedName>
        <fullName evidence="1">Glycine--tRNA ligase alpha subunit</fullName>
        <ecNumber evidence="1">6.1.1.14</ecNumber>
    </recommendedName>
    <alternativeName>
        <fullName evidence="1">Glycyl-tRNA synthetase alpha subunit</fullName>
        <shortName evidence="1">GlyRS</shortName>
    </alternativeName>
</protein>
<dbReference type="EC" id="6.1.1.14" evidence="1"/>
<dbReference type="EMBL" id="BX548175">
    <property type="protein sequence ID" value="CAE20458.1"/>
    <property type="molecule type" value="Genomic_DNA"/>
</dbReference>
<dbReference type="RefSeq" id="WP_011129662.1">
    <property type="nucleotide sequence ID" value="NC_005071.1"/>
</dbReference>
<dbReference type="SMR" id="Q7V8Q1"/>
<dbReference type="KEGG" id="pmt:PMT_0283"/>
<dbReference type="eggNOG" id="COG0752">
    <property type="taxonomic scope" value="Bacteria"/>
</dbReference>
<dbReference type="HOGENOM" id="CLU_057066_1_0_3"/>
<dbReference type="OrthoDB" id="9802183at2"/>
<dbReference type="Proteomes" id="UP000001423">
    <property type="component" value="Chromosome"/>
</dbReference>
<dbReference type="GO" id="GO:0005829">
    <property type="term" value="C:cytosol"/>
    <property type="evidence" value="ECO:0007669"/>
    <property type="project" value="TreeGrafter"/>
</dbReference>
<dbReference type="GO" id="GO:0005524">
    <property type="term" value="F:ATP binding"/>
    <property type="evidence" value="ECO:0007669"/>
    <property type="project" value="UniProtKB-UniRule"/>
</dbReference>
<dbReference type="GO" id="GO:0004820">
    <property type="term" value="F:glycine-tRNA ligase activity"/>
    <property type="evidence" value="ECO:0007669"/>
    <property type="project" value="UniProtKB-UniRule"/>
</dbReference>
<dbReference type="GO" id="GO:0006426">
    <property type="term" value="P:glycyl-tRNA aminoacylation"/>
    <property type="evidence" value="ECO:0007669"/>
    <property type="project" value="UniProtKB-UniRule"/>
</dbReference>
<dbReference type="CDD" id="cd00733">
    <property type="entry name" value="GlyRS_alpha_core"/>
    <property type="match status" value="1"/>
</dbReference>
<dbReference type="FunFam" id="3.30.930.10:FF:000006">
    <property type="entry name" value="Glycine--tRNA ligase alpha subunit"/>
    <property type="match status" value="1"/>
</dbReference>
<dbReference type="Gene3D" id="3.30.930.10">
    <property type="entry name" value="Bira Bifunctional Protein, Domain 2"/>
    <property type="match status" value="1"/>
</dbReference>
<dbReference type="Gene3D" id="1.20.58.180">
    <property type="entry name" value="Class II aaRS and biotin synthetases, domain 2"/>
    <property type="match status" value="1"/>
</dbReference>
<dbReference type="HAMAP" id="MF_00254">
    <property type="entry name" value="Gly_tRNA_synth_alpha"/>
    <property type="match status" value="1"/>
</dbReference>
<dbReference type="InterPro" id="IPR045864">
    <property type="entry name" value="aa-tRNA-synth_II/BPL/LPL"/>
</dbReference>
<dbReference type="InterPro" id="IPR006194">
    <property type="entry name" value="Gly-tRNA-synth_heterodimer"/>
</dbReference>
<dbReference type="InterPro" id="IPR002310">
    <property type="entry name" value="Gly-tRNA_ligase_asu"/>
</dbReference>
<dbReference type="NCBIfam" id="TIGR00388">
    <property type="entry name" value="glyQ"/>
    <property type="match status" value="1"/>
</dbReference>
<dbReference type="NCBIfam" id="NF006827">
    <property type="entry name" value="PRK09348.1"/>
    <property type="match status" value="1"/>
</dbReference>
<dbReference type="PANTHER" id="PTHR30075:SF2">
    <property type="entry name" value="GLYCINE--TRNA LIGASE, CHLOROPLASTIC_MITOCHONDRIAL 2"/>
    <property type="match status" value="1"/>
</dbReference>
<dbReference type="PANTHER" id="PTHR30075">
    <property type="entry name" value="GLYCYL-TRNA SYNTHETASE"/>
    <property type="match status" value="1"/>
</dbReference>
<dbReference type="Pfam" id="PF02091">
    <property type="entry name" value="tRNA-synt_2e"/>
    <property type="match status" value="1"/>
</dbReference>
<dbReference type="PRINTS" id="PR01044">
    <property type="entry name" value="TRNASYNTHGA"/>
</dbReference>
<dbReference type="SUPFAM" id="SSF55681">
    <property type="entry name" value="Class II aaRS and biotin synthetases"/>
    <property type="match status" value="1"/>
</dbReference>
<dbReference type="PROSITE" id="PS50861">
    <property type="entry name" value="AA_TRNA_LIGASE_II_GLYAB"/>
    <property type="match status" value="1"/>
</dbReference>